<protein>
    <recommendedName>
        <fullName evidence="1">ATP synthase subunit beta</fullName>
        <ecNumber evidence="1">7.1.2.2</ecNumber>
    </recommendedName>
    <alternativeName>
        <fullName evidence="1">ATP synthase F1 sector subunit beta</fullName>
    </alternativeName>
    <alternativeName>
        <fullName evidence="1">F-ATPase subunit beta</fullName>
    </alternativeName>
</protein>
<dbReference type="EC" id="7.1.2.2" evidence="1"/>
<dbReference type="EMBL" id="AF059739">
    <property type="protein sequence ID" value="AAF02210.1"/>
    <property type="molecule type" value="Genomic_DNA"/>
</dbReference>
<dbReference type="EMBL" id="AM406671">
    <property type="protein sequence ID" value="CAL98514.1"/>
    <property type="status" value="ALT_INIT"/>
    <property type="molecule type" value="Genomic_DNA"/>
</dbReference>
<dbReference type="RefSeq" id="WP_014735119.1">
    <property type="nucleotide sequence ID" value="NC_009004.1"/>
</dbReference>
<dbReference type="SMR" id="A2RMI2"/>
<dbReference type="STRING" id="416870.llmg_1946"/>
<dbReference type="GeneID" id="61110023"/>
<dbReference type="KEGG" id="llm:llmg_1946"/>
<dbReference type="eggNOG" id="COG0055">
    <property type="taxonomic scope" value="Bacteria"/>
</dbReference>
<dbReference type="HOGENOM" id="CLU_022398_0_2_9"/>
<dbReference type="OrthoDB" id="9801639at2"/>
<dbReference type="Proteomes" id="UP000000364">
    <property type="component" value="Chromosome"/>
</dbReference>
<dbReference type="GO" id="GO:0005886">
    <property type="term" value="C:plasma membrane"/>
    <property type="evidence" value="ECO:0007669"/>
    <property type="project" value="UniProtKB-SubCell"/>
</dbReference>
<dbReference type="GO" id="GO:0045259">
    <property type="term" value="C:proton-transporting ATP synthase complex"/>
    <property type="evidence" value="ECO:0007669"/>
    <property type="project" value="UniProtKB-KW"/>
</dbReference>
<dbReference type="GO" id="GO:0005524">
    <property type="term" value="F:ATP binding"/>
    <property type="evidence" value="ECO:0007669"/>
    <property type="project" value="UniProtKB-UniRule"/>
</dbReference>
<dbReference type="GO" id="GO:0016887">
    <property type="term" value="F:ATP hydrolysis activity"/>
    <property type="evidence" value="ECO:0007669"/>
    <property type="project" value="InterPro"/>
</dbReference>
<dbReference type="GO" id="GO:0046933">
    <property type="term" value="F:proton-transporting ATP synthase activity, rotational mechanism"/>
    <property type="evidence" value="ECO:0007669"/>
    <property type="project" value="UniProtKB-UniRule"/>
</dbReference>
<dbReference type="CDD" id="cd18110">
    <property type="entry name" value="ATP-synt_F1_beta_C"/>
    <property type="match status" value="1"/>
</dbReference>
<dbReference type="CDD" id="cd18115">
    <property type="entry name" value="ATP-synt_F1_beta_N"/>
    <property type="match status" value="1"/>
</dbReference>
<dbReference type="CDD" id="cd01133">
    <property type="entry name" value="F1-ATPase_beta_CD"/>
    <property type="match status" value="1"/>
</dbReference>
<dbReference type="FunFam" id="1.10.1140.10:FF:000001">
    <property type="entry name" value="ATP synthase subunit beta"/>
    <property type="match status" value="1"/>
</dbReference>
<dbReference type="FunFam" id="2.40.10.170:FF:000005">
    <property type="entry name" value="ATP synthase subunit beta"/>
    <property type="match status" value="1"/>
</dbReference>
<dbReference type="FunFam" id="3.40.50.300:FF:000004">
    <property type="entry name" value="ATP synthase subunit beta"/>
    <property type="match status" value="1"/>
</dbReference>
<dbReference type="Gene3D" id="2.40.10.170">
    <property type="match status" value="1"/>
</dbReference>
<dbReference type="Gene3D" id="1.10.1140.10">
    <property type="entry name" value="Bovine Mitochondrial F1-atpase, Atp Synthase Beta Chain, Chain D, domain 3"/>
    <property type="match status" value="1"/>
</dbReference>
<dbReference type="Gene3D" id="3.40.50.300">
    <property type="entry name" value="P-loop containing nucleotide triphosphate hydrolases"/>
    <property type="match status" value="1"/>
</dbReference>
<dbReference type="HAMAP" id="MF_01347">
    <property type="entry name" value="ATP_synth_beta_bact"/>
    <property type="match status" value="1"/>
</dbReference>
<dbReference type="InterPro" id="IPR003593">
    <property type="entry name" value="AAA+_ATPase"/>
</dbReference>
<dbReference type="InterPro" id="IPR055190">
    <property type="entry name" value="ATP-synt_VA_C"/>
</dbReference>
<dbReference type="InterPro" id="IPR005722">
    <property type="entry name" value="ATP_synth_F1_bsu"/>
</dbReference>
<dbReference type="InterPro" id="IPR020003">
    <property type="entry name" value="ATPase_a/bsu_AS"/>
</dbReference>
<dbReference type="InterPro" id="IPR050053">
    <property type="entry name" value="ATPase_alpha/beta_chains"/>
</dbReference>
<dbReference type="InterPro" id="IPR004100">
    <property type="entry name" value="ATPase_F1/V1/A1_a/bsu_N"/>
</dbReference>
<dbReference type="InterPro" id="IPR036121">
    <property type="entry name" value="ATPase_F1/V1/A1_a/bsu_N_sf"/>
</dbReference>
<dbReference type="InterPro" id="IPR000194">
    <property type="entry name" value="ATPase_F1/V1/A1_a/bsu_nucl-bd"/>
</dbReference>
<dbReference type="InterPro" id="IPR024034">
    <property type="entry name" value="ATPase_F1/V1_b/a_C"/>
</dbReference>
<dbReference type="InterPro" id="IPR027417">
    <property type="entry name" value="P-loop_NTPase"/>
</dbReference>
<dbReference type="NCBIfam" id="TIGR01039">
    <property type="entry name" value="atpD"/>
    <property type="match status" value="1"/>
</dbReference>
<dbReference type="PANTHER" id="PTHR15184">
    <property type="entry name" value="ATP SYNTHASE"/>
    <property type="match status" value="1"/>
</dbReference>
<dbReference type="PANTHER" id="PTHR15184:SF71">
    <property type="entry name" value="ATP SYNTHASE SUBUNIT BETA, MITOCHONDRIAL"/>
    <property type="match status" value="1"/>
</dbReference>
<dbReference type="Pfam" id="PF00006">
    <property type="entry name" value="ATP-synt_ab"/>
    <property type="match status" value="1"/>
</dbReference>
<dbReference type="Pfam" id="PF02874">
    <property type="entry name" value="ATP-synt_ab_N"/>
    <property type="match status" value="1"/>
</dbReference>
<dbReference type="Pfam" id="PF22919">
    <property type="entry name" value="ATP-synt_VA_C"/>
    <property type="match status" value="1"/>
</dbReference>
<dbReference type="SMART" id="SM00382">
    <property type="entry name" value="AAA"/>
    <property type="match status" value="1"/>
</dbReference>
<dbReference type="SUPFAM" id="SSF47917">
    <property type="entry name" value="C-terminal domain of alpha and beta subunits of F1 ATP synthase"/>
    <property type="match status" value="1"/>
</dbReference>
<dbReference type="SUPFAM" id="SSF50615">
    <property type="entry name" value="N-terminal domain of alpha and beta subunits of F1 ATP synthase"/>
    <property type="match status" value="1"/>
</dbReference>
<dbReference type="SUPFAM" id="SSF52540">
    <property type="entry name" value="P-loop containing nucleoside triphosphate hydrolases"/>
    <property type="match status" value="1"/>
</dbReference>
<dbReference type="PROSITE" id="PS00152">
    <property type="entry name" value="ATPASE_ALPHA_BETA"/>
    <property type="match status" value="1"/>
</dbReference>
<keyword id="KW-0066">ATP synthesis</keyword>
<keyword id="KW-0067">ATP-binding</keyword>
<keyword id="KW-1003">Cell membrane</keyword>
<keyword id="KW-0139">CF(1)</keyword>
<keyword id="KW-0375">Hydrogen ion transport</keyword>
<keyword id="KW-0406">Ion transport</keyword>
<keyword id="KW-0472">Membrane</keyword>
<keyword id="KW-0547">Nucleotide-binding</keyword>
<keyword id="KW-1278">Translocase</keyword>
<keyword id="KW-0813">Transport</keyword>
<evidence type="ECO:0000255" key="1">
    <source>
        <dbReference type="HAMAP-Rule" id="MF_01347"/>
    </source>
</evidence>
<evidence type="ECO:0000305" key="2"/>
<reference key="1">
    <citation type="journal article" date="2000" name="J. Bacteriol.">
        <title>The membrane bound H+-ATPase complex is essential for growth of Lactococcus lactis.</title>
        <authorList>
            <person name="Koebmann B.J."/>
            <person name="Nilsson D."/>
            <person name="Kuipers O.P."/>
            <person name="Jensen P.R."/>
        </authorList>
    </citation>
    <scope>NUCLEOTIDE SEQUENCE [GENOMIC DNA]</scope>
</reference>
<reference key="2">
    <citation type="journal article" date="2007" name="J. Bacteriol.">
        <title>The complete genome sequence of the lactic acid bacterial paradigm Lactococcus lactis subsp. cremoris MG1363.</title>
        <authorList>
            <person name="Wegmann U."/>
            <person name="O'Connell-Motherway M."/>
            <person name="Zomer A."/>
            <person name="Buist G."/>
            <person name="Shearman C."/>
            <person name="Canchaya C."/>
            <person name="Ventura M."/>
            <person name="Goesmann A."/>
            <person name="Gasson M.J."/>
            <person name="Kuipers O.P."/>
            <person name="van Sinderen D."/>
            <person name="Kok J."/>
        </authorList>
    </citation>
    <scope>NUCLEOTIDE SEQUENCE [LARGE SCALE GENOMIC DNA]</scope>
    <source>
        <strain>MG1363</strain>
    </source>
</reference>
<gene>
    <name evidence="1" type="primary">atpD</name>
    <name type="ordered locus">llmg_1946</name>
</gene>
<accession>A2RMI2</accession>
<accession>Q9RAU0</accession>
<organism>
    <name type="scientific">Lactococcus lactis subsp. cremoris (strain MG1363)</name>
    <dbReference type="NCBI Taxonomy" id="416870"/>
    <lineage>
        <taxon>Bacteria</taxon>
        <taxon>Bacillati</taxon>
        <taxon>Bacillota</taxon>
        <taxon>Bacilli</taxon>
        <taxon>Lactobacillales</taxon>
        <taxon>Streptococcaceae</taxon>
        <taxon>Lactococcus</taxon>
        <taxon>Lactococcus cremoris subsp. cremoris</taxon>
    </lineage>
</organism>
<proteinExistence type="inferred from homology"/>
<name>ATPB_LACLM</name>
<comment type="function">
    <text evidence="1">Produces ATP from ADP in the presence of a proton gradient across the membrane. The catalytic sites are hosted primarily by the beta subunits.</text>
</comment>
<comment type="catalytic activity">
    <reaction evidence="1">
        <text>ATP + H2O + 4 H(+)(in) = ADP + phosphate + 5 H(+)(out)</text>
        <dbReference type="Rhea" id="RHEA:57720"/>
        <dbReference type="ChEBI" id="CHEBI:15377"/>
        <dbReference type="ChEBI" id="CHEBI:15378"/>
        <dbReference type="ChEBI" id="CHEBI:30616"/>
        <dbReference type="ChEBI" id="CHEBI:43474"/>
        <dbReference type="ChEBI" id="CHEBI:456216"/>
        <dbReference type="EC" id="7.1.2.2"/>
    </reaction>
</comment>
<comment type="subunit">
    <text evidence="1">F-type ATPases have 2 components, CF(1) - the catalytic core - and CF(0) - the membrane proton channel. CF(1) has five subunits: alpha(3), beta(3), gamma(1), delta(1), epsilon(1). CF(0) has three main subunits: a(1), b(2) and c(9-12). The alpha and beta chains form an alternating ring which encloses part of the gamma chain. CF(1) is attached to CF(0) by a central stalk formed by the gamma and epsilon chains, while a peripheral stalk is formed by the delta and b chains.</text>
</comment>
<comment type="subcellular location">
    <subcellularLocation>
        <location evidence="1">Cell membrane</location>
        <topology evidence="1">Peripheral membrane protein</topology>
    </subcellularLocation>
</comment>
<comment type="similarity">
    <text evidence="1">Belongs to the ATPase alpha/beta chains family.</text>
</comment>
<comment type="sequence caution" evidence="2">
    <conflict type="erroneous initiation">
        <sequence resource="EMBL-CDS" id="CAL98514"/>
    </conflict>
</comment>
<sequence length="469" mass="50867">MSSGKITQVIGPVVDVEFGSDAKLPEINNALIVYKDVNGLKTKITLEVALELGDGAVRTIAMESTDGLTRGLEVLDTGKAVSVPVGESTLGRVFNVLGDVIDGGEDFPADAERNPIHKKAPTFDELSTANEVLVTGIKVVDLLAPYLKGGKVGLFGGAGVGKTVLIQELIHNIAQEHGGISVFTGVGERTREGNDLYWEMKESGVIEKTAMVFGQMNEPPGARMRVALTGLTIAEYFRDVQGQDVLLFIDNIFRFTQAGSEVSALLGRMPSAVGYQPTLATEMGQLQERITSTKKGSVTSIQAIYVPADDYTDPAPATAFAHLDATTNLERRLTQMGIYPAVDPLASSSRALTPEIVGEEHYEVAMEVQRVLQRYKELQDIIAILGMDELSDDEKILVGRARRIQFFLSQNFHVAEQFTGQPGSYVPIDKTVHDFKEILEGKYDEVPEDAFRGVGPIEDVLAKAKSMGY</sequence>
<feature type="chain" id="PRO_0000285241" description="ATP synthase subunit beta">
    <location>
        <begin position="1"/>
        <end position="469"/>
    </location>
</feature>
<feature type="binding site" evidence="1">
    <location>
        <begin position="156"/>
        <end position="163"/>
    </location>
    <ligand>
        <name>ATP</name>
        <dbReference type="ChEBI" id="CHEBI:30616"/>
    </ligand>
</feature>